<proteinExistence type="inferred from homology"/>
<protein>
    <recommendedName>
        <fullName evidence="1">Probable nicotinate-nucleotide adenylyltransferase</fullName>
        <ecNumber evidence="1">2.7.7.18</ecNumber>
    </recommendedName>
    <alternativeName>
        <fullName evidence="1">Deamido-NAD(+) diphosphorylase</fullName>
    </alternativeName>
    <alternativeName>
        <fullName evidence="1">Deamido-NAD(+) pyrophosphorylase</fullName>
    </alternativeName>
    <alternativeName>
        <fullName evidence="1">Nicotinate mononucleotide adenylyltransferase</fullName>
        <shortName evidence="1">NaMN adenylyltransferase</shortName>
    </alternativeName>
</protein>
<gene>
    <name evidence="1" type="primary">nadD</name>
    <name type="ordered locus">ECIAI39_0614</name>
</gene>
<dbReference type="EC" id="2.7.7.18" evidence="1"/>
<dbReference type="EMBL" id="CU928164">
    <property type="protein sequence ID" value="CAR16751.1"/>
    <property type="molecule type" value="Genomic_DNA"/>
</dbReference>
<dbReference type="RefSeq" id="WP_000838889.1">
    <property type="nucleotide sequence ID" value="NC_011750.1"/>
</dbReference>
<dbReference type="RefSeq" id="YP_002406640.1">
    <property type="nucleotide sequence ID" value="NC_011750.1"/>
</dbReference>
<dbReference type="SMR" id="B7NLZ8"/>
<dbReference type="STRING" id="585057.ECIAI39_0614"/>
<dbReference type="GeneID" id="93776843"/>
<dbReference type="KEGG" id="ect:ECIAI39_0614"/>
<dbReference type="PATRIC" id="fig|585057.6.peg.653"/>
<dbReference type="HOGENOM" id="CLU_069765_0_0_6"/>
<dbReference type="UniPathway" id="UPA00253">
    <property type="reaction ID" value="UER00332"/>
</dbReference>
<dbReference type="Proteomes" id="UP000000749">
    <property type="component" value="Chromosome"/>
</dbReference>
<dbReference type="GO" id="GO:0005524">
    <property type="term" value="F:ATP binding"/>
    <property type="evidence" value="ECO:0007669"/>
    <property type="project" value="UniProtKB-KW"/>
</dbReference>
<dbReference type="GO" id="GO:0004515">
    <property type="term" value="F:nicotinate-nucleotide adenylyltransferase activity"/>
    <property type="evidence" value="ECO:0007669"/>
    <property type="project" value="UniProtKB-UniRule"/>
</dbReference>
<dbReference type="GO" id="GO:0009435">
    <property type="term" value="P:NAD biosynthetic process"/>
    <property type="evidence" value="ECO:0007669"/>
    <property type="project" value="UniProtKB-UniRule"/>
</dbReference>
<dbReference type="CDD" id="cd02165">
    <property type="entry name" value="NMNAT"/>
    <property type="match status" value="1"/>
</dbReference>
<dbReference type="FunFam" id="3.40.50.620:FF:000039">
    <property type="entry name" value="Probable nicotinate-nucleotide adenylyltransferase"/>
    <property type="match status" value="1"/>
</dbReference>
<dbReference type="Gene3D" id="3.40.50.620">
    <property type="entry name" value="HUPs"/>
    <property type="match status" value="1"/>
</dbReference>
<dbReference type="HAMAP" id="MF_00244">
    <property type="entry name" value="NaMN_adenylyltr"/>
    <property type="match status" value="1"/>
</dbReference>
<dbReference type="InterPro" id="IPR004821">
    <property type="entry name" value="Cyt_trans-like"/>
</dbReference>
<dbReference type="InterPro" id="IPR005248">
    <property type="entry name" value="NadD/NMNAT"/>
</dbReference>
<dbReference type="InterPro" id="IPR014729">
    <property type="entry name" value="Rossmann-like_a/b/a_fold"/>
</dbReference>
<dbReference type="NCBIfam" id="TIGR00125">
    <property type="entry name" value="cyt_tran_rel"/>
    <property type="match status" value="1"/>
</dbReference>
<dbReference type="NCBIfam" id="TIGR00482">
    <property type="entry name" value="nicotinate (nicotinamide) nucleotide adenylyltransferase"/>
    <property type="match status" value="1"/>
</dbReference>
<dbReference type="NCBIfam" id="NF000839">
    <property type="entry name" value="PRK00071.1-1"/>
    <property type="match status" value="1"/>
</dbReference>
<dbReference type="NCBIfam" id="NF000840">
    <property type="entry name" value="PRK00071.1-3"/>
    <property type="match status" value="1"/>
</dbReference>
<dbReference type="PANTHER" id="PTHR39321">
    <property type="entry name" value="NICOTINATE-NUCLEOTIDE ADENYLYLTRANSFERASE-RELATED"/>
    <property type="match status" value="1"/>
</dbReference>
<dbReference type="PANTHER" id="PTHR39321:SF3">
    <property type="entry name" value="PHOSPHOPANTETHEINE ADENYLYLTRANSFERASE"/>
    <property type="match status" value="1"/>
</dbReference>
<dbReference type="Pfam" id="PF01467">
    <property type="entry name" value="CTP_transf_like"/>
    <property type="match status" value="1"/>
</dbReference>
<dbReference type="SUPFAM" id="SSF52374">
    <property type="entry name" value="Nucleotidylyl transferase"/>
    <property type="match status" value="1"/>
</dbReference>
<name>NADD_ECO7I</name>
<feature type="chain" id="PRO_1000192236" description="Probable nicotinate-nucleotide adenylyltransferase">
    <location>
        <begin position="1"/>
        <end position="213"/>
    </location>
</feature>
<accession>B7NLZ8</accession>
<keyword id="KW-0067">ATP-binding</keyword>
<keyword id="KW-0520">NAD</keyword>
<keyword id="KW-0547">Nucleotide-binding</keyword>
<keyword id="KW-0548">Nucleotidyltransferase</keyword>
<keyword id="KW-0662">Pyridine nucleotide biosynthesis</keyword>
<keyword id="KW-0808">Transferase</keyword>
<reference key="1">
    <citation type="journal article" date="2009" name="PLoS Genet.">
        <title>Organised genome dynamics in the Escherichia coli species results in highly diverse adaptive paths.</title>
        <authorList>
            <person name="Touchon M."/>
            <person name="Hoede C."/>
            <person name="Tenaillon O."/>
            <person name="Barbe V."/>
            <person name="Baeriswyl S."/>
            <person name="Bidet P."/>
            <person name="Bingen E."/>
            <person name="Bonacorsi S."/>
            <person name="Bouchier C."/>
            <person name="Bouvet O."/>
            <person name="Calteau A."/>
            <person name="Chiapello H."/>
            <person name="Clermont O."/>
            <person name="Cruveiller S."/>
            <person name="Danchin A."/>
            <person name="Diard M."/>
            <person name="Dossat C."/>
            <person name="Karoui M.E."/>
            <person name="Frapy E."/>
            <person name="Garry L."/>
            <person name="Ghigo J.M."/>
            <person name="Gilles A.M."/>
            <person name="Johnson J."/>
            <person name="Le Bouguenec C."/>
            <person name="Lescat M."/>
            <person name="Mangenot S."/>
            <person name="Martinez-Jehanne V."/>
            <person name="Matic I."/>
            <person name="Nassif X."/>
            <person name="Oztas S."/>
            <person name="Petit M.A."/>
            <person name="Pichon C."/>
            <person name="Rouy Z."/>
            <person name="Ruf C.S."/>
            <person name="Schneider D."/>
            <person name="Tourret J."/>
            <person name="Vacherie B."/>
            <person name="Vallenet D."/>
            <person name="Medigue C."/>
            <person name="Rocha E.P.C."/>
            <person name="Denamur E."/>
        </authorList>
    </citation>
    <scope>NUCLEOTIDE SEQUENCE [LARGE SCALE GENOMIC DNA]</scope>
    <source>
        <strain>IAI39 / ExPEC</strain>
    </source>
</reference>
<sequence length="213" mass="24528">MKSLQALFGGTFDPVHYGHLKPVETLANLIGLTRVTIIPNNVPPHRPQPEANSVQRKHMLELAIADKPLFTLDERELKRNAPSYTAQTLKEWRQEQGPDVPLAFIIGQDSLLTFPTWYEYETILDNAHLIVCRRPGYPLEMAQPQYQQWLEDHLTHNPEDLHLQPAGKIYLAETPWFNISATIIRERLQNGESCEDLLPEPVLTYINQQGLYR</sequence>
<evidence type="ECO:0000255" key="1">
    <source>
        <dbReference type="HAMAP-Rule" id="MF_00244"/>
    </source>
</evidence>
<organism>
    <name type="scientific">Escherichia coli O7:K1 (strain IAI39 / ExPEC)</name>
    <dbReference type="NCBI Taxonomy" id="585057"/>
    <lineage>
        <taxon>Bacteria</taxon>
        <taxon>Pseudomonadati</taxon>
        <taxon>Pseudomonadota</taxon>
        <taxon>Gammaproteobacteria</taxon>
        <taxon>Enterobacterales</taxon>
        <taxon>Enterobacteriaceae</taxon>
        <taxon>Escherichia</taxon>
    </lineage>
</organism>
<comment type="function">
    <text evidence="1">Catalyzes the reversible adenylation of nicotinate mononucleotide (NaMN) to nicotinic acid adenine dinucleotide (NaAD).</text>
</comment>
<comment type="catalytic activity">
    <reaction evidence="1">
        <text>nicotinate beta-D-ribonucleotide + ATP + H(+) = deamido-NAD(+) + diphosphate</text>
        <dbReference type="Rhea" id="RHEA:22860"/>
        <dbReference type="ChEBI" id="CHEBI:15378"/>
        <dbReference type="ChEBI" id="CHEBI:30616"/>
        <dbReference type="ChEBI" id="CHEBI:33019"/>
        <dbReference type="ChEBI" id="CHEBI:57502"/>
        <dbReference type="ChEBI" id="CHEBI:58437"/>
        <dbReference type="EC" id="2.7.7.18"/>
    </reaction>
</comment>
<comment type="pathway">
    <text evidence="1">Cofactor biosynthesis; NAD(+) biosynthesis; deamido-NAD(+) from nicotinate D-ribonucleotide: step 1/1.</text>
</comment>
<comment type="similarity">
    <text evidence="1">Belongs to the NadD family.</text>
</comment>